<name>RISB_PROMT</name>
<reference key="1">
    <citation type="journal article" date="2007" name="PLoS Genet.">
        <title>Patterns and implications of gene gain and loss in the evolution of Prochlorococcus.</title>
        <authorList>
            <person name="Kettler G.C."/>
            <person name="Martiny A.C."/>
            <person name="Huang K."/>
            <person name="Zucker J."/>
            <person name="Coleman M.L."/>
            <person name="Rodrigue S."/>
            <person name="Chen F."/>
            <person name="Lapidus A."/>
            <person name="Ferriera S."/>
            <person name="Johnson J."/>
            <person name="Steglich C."/>
            <person name="Church G.M."/>
            <person name="Richardson P."/>
            <person name="Chisholm S.W."/>
        </authorList>
    </citation>
    <scope>NUCLEOTIDE SEQUENCE [LARGE SCALE GENOMIC DNA]</scope>
    <source>
        <strain>NATL2A</strain>
    </source>
</reference>
<accession>Q46IE7</accession>
<sequence length="158" mass="16955">MATIEGTFVNSSSLRVAIVIARFNDLITNKLLSGCMDCLSRHGIDVSESSNQLDIAWVPGSFELPIISQKLARNGNYDVVITLGAVIRGDTPHFDVVVSEASKGIATVSRETGVPIIFGVLTTDTMQQALERAGIKNNLGWSYALQALEMGSLMKAVN</sequence>
<comment type="function">
    <text evidence="1">Catalyzes the formation of 6,7-dimethyl-8-ribityllumazine by condensation of 5-amino-6-(D-ribitylamino)uracil with 3,4-dihydroxy-2-butanone 4-phosphate. This is the penultimate step in the biosynthesis of riboflavin.</text>
</comment>
<comment type="catalytic activity">
    <reaction evidence="1">
        <text>(2S)-2-hydroxy-3-oxobutyl phosphate + 5-amino-6-(D-ribitylamino)uracil = 6,7-dimethyl-8-(1-D-ribityl)lumazine + phosphate + 2 H2O + H(+)</text>
        <dbReference type="Rhea" id="RHEA:26152"/>
        <dbReference type="ChEBI" id="CHEBI:15377"/>
        <dbReference type="ChEBI" id="CHEBI:15378"/>
        <dbReference type="ChEBI" id="CHEBI:15934"/>
        <dbReference type="ChEBI" id="CHEBI:43474"/>
        <dbReference type="ChEBI" id="CHEBI:58201"/>
        <dbReference type="ChEBI" id="CHEBI:58830"/>
        <dbReference type="EC" id="2.5.1.78"/>
    </reaction>
</comment>
<comment type="pathway">
    <text evidence="1">Cofactor biosynthesis; riboflavin biosynthesis; riboflavin from 2-hydroxy-3-oxobutyl phosphate and 5-amino-6-(D-ribitylamino)uracil: step 1/2.</text>
</comment>
<comment type="similarity">
    <text evidence="1">Belongs to the DMRL synthase family.</text>
</comment>
<evidence type="ECO:0000255" key="1">
    <source>
        <dbReference type="HAMAP-Rule" id="MF_00178"/>
    </source>
</evidence>
<dbReference type="EC" id="2.5.1.78" evidence="1"/>
<dbReference type="EMBL" id="CP000095">
    <property type="protein sequence ID" value="AAZ58731.1"/>
    <property type="molecule type" value="Genomic_DNA"/>
</dbReference>
<dbReference type="RefSeq" id="WP_011295585.1">
    <property type="nucleotide sequence ID" value="NC_007335.2"/>
</dbReference>
<dbReference type="SMR" id="Q46IE7"/>
<dbReference type="STRING" id="59920.PMN2A_1241"/>
<dbReference type="KEGG" id="pmn:PMN2A_1241"/>
<dbReference type="HOGENOM" id="CLU_089358_1_0_3"/>
<dbReference type="OrthoDB" id="9809709at2"/>
<dbReference type="PhylomeDB" id="Q46IE7"/>
<dbReference type="UniPathway" id="UPA00275">
    <property type="reaction ID" value="UER00404"/>
</dbReference>
<dbReference type="Proteomes" id="UP000002535">
    <property type="component" value="Chromosome"/>
</dbReference>
<dbReference type="GO" id="GO:0005829">
    <property type="term" value="C:cytosol"/>
    <property type="evidence" value="ECO:0007669"/>
    <property type="project" value="TreeGrafter"/>
</dbReference>
<dbReference type="GO" id="GO:0009349">
    <property type="term" value="C:riboflavin synthase complex"/>
    <property type="evidence" value="ECO:0007669"/>
    <property type="project" value="InterPro"/>
</dbReference>
<dbReference type="GO" id="GO:0000906">
    <property type="term" value="F:6,7-dimethyl-8-ribityllumazine synthase activity"/>
    <property type="evidence" value="ECO:0007669"/>
    <property type="project" value="UniProtKB-UniRule"/>
</dbReference>
<dbReference type="GO" id="GO:0009231">
    <property type="term" value="P:riboflavin biosynthetic process"/>
    <property type="evidence" value="ECO:0007669"/>
    <property type="project" value="UniProtKB-UniRule"/>
</dbReference>
<dbReference type="CDD" id="cd09209">
    <property type="entry name" value="Lumazine_synthase-I"/>
    <property type="match status" value="1"/>
</dbReference>
<dbReference type="FunFam" id="3.40.50.960:FF:000001">
    <property type="entry name" value="6,7-dimethyl-8-ribityllumazine synthase"/>
    <property type="match status" value="1"/>
</dbReference>
<dbReference type="Gene3D" id="3.40.50.960">
    <property type="entry name" value="Lumazine/riboflavin synthase"/>
    <property type="match status" value="1"/>
</dbReference>
<dbReference type="HAMAP" id="MF_00178">
    <property type="entry name" value="Lumazine_synth"/>
    <property type="match status" value="1"/>
</dbReference>
<dbReference type="InterPro" id="IPR034964">
    <property type="entry name" value="LS"/>
</dbReference>
<dbReference type="InterPro" id="IPR002180">
    <property type="entry name" value="LS/RS"/>
</dbReference>
<dbReference type="InterPro" id="IPR036467">
    <property type="entry name" value="LS/RS_sf"/>
</dbReference>
<dbReference type="NCBIfam" id="TIGR00114">
    <property type="entry name" value="lumazine-synth"/>
    <property type="match status" value="1"/>
</dbReference>
<dbReference type="PANTHER" id="PTHR21058:SF0">
    <property type="entry name" value="6,7-DIMETHYL-8-RIBITYLLUMAZINE SYNTHASE"/>
    <property type="match status" value="1"/>
</dbReference>
<dbReference type="PANTHER" id="PTHR21058">
    <property type="entry name" value="6,7-DIMETHYL-8-RIBITYLLUMAZINE SYNTHASE DMRL SYNTHASE LUMAZINE SYNTHASE"/>
    <property type="match status" value="1"/>
</dbReference>
<dbReference type="Pfam" id="PF00885">
    <property type="entry name" value="DMRL_synthase"/>
    <property type="match status" value="1"/>
</dbReference>
<dbReference type="SUPFAM" id="SSF52121">
    <property type="entry name" value="Lumazine synthase"/>
    <property type="match status" value="1"/>
</dbReference>
<gene>
    <name evidence="1" type="primary">ribH</name>
    <name type="ordered locus">PMN2A_1241</name>
</gene>
<protein>
    <recommendedName>
        <fullName evidence="1">6,7-dimethyl-8-ribityllumazine synthase</fullName>
        <shortName evidence="1">DMRL synthase</shortName>
        <shortName evidence="1">LS</shortName>
        <shortName evidence="1">Lumazine synthase</shortName>
        <ecNumber evidence="1">2.5.1.78</ecNumber>
    </recommendedName>
</protein>
<feature type="chain" id="PRO_1000040484" description="6,7-dimethyl-8-ribityllumazine synthase">
    <location>
        <begin position="1"/>
        <end position="158"/>
    </location>
</feature>
<feature type="active site" description="Proton donor" evidence="1">
    <location>
        <position position="93"/>
    </location>
</feature>
<feature type="binding site" evidence="1">
    <location>
        <position position="23"/>
    </location>
    <ligand>
        <name>5-amino-6-(D-ribitylamino)uracil</name>
        <dbReference type="ChEBI" id="CHEBI:15934"/>
    </ligand>
</feature>
<feature type="binding site" evidence="1">
    <location>
        <begin position="61"/>
        <end position="63"/>
    </location>
    <ligand>
        <name>5-amino-6-(D-ribitylamino)uracil</name>
        <dbReference type="ChEBI" id="CHEBI:15934"/>
    </ligand>
</feature>
<feature type="binding site" evidence="1">
    <location>
        <begin position="85"/>
        <end position="87"/>
    </location>
    <ligand>
        <name>5-amino-6-(D-ribitylamino)uracil</name>
        <dbReference type="ChEBI" id="CHEBI:15934"/>
    </ligand>
</feature>
<feature type="binding site" evidence="1">
    <location>
        <begin position="90"/>
        <end position="91"/>
    </location>
    <ligand>
        <name>(2S)-2-hydroxy-3-oxobutyl phosphate</name>
        <dbReference type="ChEBI" id="CHEBI:58830"/>
    </ligand>
</feature>
<feature type="binding site" evidence="1">
    <location>
        <position position="118"/>
    </location>
    <ligand>
        <name>5-amino-6-(D-ribitylamino)uracil</name>
        <dbReference type="ChEBI" id="CHEBI:15934"/>
    </ligand>
</feature>
<feature type="binding site" evidence="1">
    <location>
        <position position="132"/>
    </location>
    <ligand>
        <name>(2S)-2-hydroxy-3-oxobutyl phosphate</name>
        <dbReference type="ChEBI" id="CHEBI:58830"/>
    </ligand>
</feature>
<proteinExistence type="inferred from homology"/>
<keyword id="KW-1185">Reference proteome</keyword>
<keyword id="KW-0686">Riboflavin biosynthesis</keyword>
<keyword id="KW-0808">Transferase</keyword>
<organism>
    <name type="scientific">Prochlorococcus marinus (strain NATL2A)</name>
    <dbReference type="NCBI Taxonomy" id="59920"/>
    <lineage>
        <taxon>Bacteria</taxon>
        <taxon>Bacillati</taxon>
        <taxon>Cyanobacteriota</taxon>
        <taxon>Cyanophyceae</taxon>
        <taxon>Synechococcales</taxon>
        <taxon>Prochlorococcaceae</taxon>
        <taxon>Prochlorococcus</taxon>
    </lineage>
</organism>